<feature type="chain" id="PRO_1000191027" description="UDP-2,3-diacylglucosamine hydrolase">
    <location>
        <begin position="1"/>
        <end position="240"/>
    </location>
</feature>
<feature type="binding site" evidence="1">
    <location>
        <position position="8"/>
    </location>
    <ligand>
        <name>Mn(2+)</name>
        <dbReference type="ChEBI" id="CHEBI:29035"/>
        <label>1</label>
    </ligand>
</feature>
<feature type="binding site" evidence="1">
    <location>
        <position position="10"/>
    </location>
    <ligand>
        <name>Mn(2+)</name>
        <dbReference type="ChEBI" id="CHEBI:29035"/>
        <label>1</label>
    </ligand>
</feature>
<feature type="binding site" evidence="1">
    <location>
        <position position="41"/>
    </location>
    <ligand>
        <name>Mn(2+)</name>
        <dbReference type="ChEBI" id="CHEBI:29035"/>
        <label>1</label>
    </ligand>
</feature>
<feature type="binding site" evidence="1">
    <location>
        <position position="41"/>
    </location>
    <ligand>
        <name>Mn(2+)</name>
        <dbReference type="ChEBI" id="CHEBI:29035"/>
        <label>2</label>
    </ligand>
</feature>
<feature type="binding site" evidence="1">
    <location>
        <begin position="79"/>
        <end position="80"/>
    </location>
    <ligand>
        <name>substrate</name>
    </ligand>
</feature>
<feature type="binding site" evidence="1">
    <location>
        <position position="79"/>
    </location>
    <ligand>
        <name>Mn(2+)</name>
        <dbReference type="ChEBI" id="CHEBI:29035"/>
        <label>2</label>
    </ligand>
</feature>
<feature type="binding site" evidence="1">
    <location>
        <position position="114"/>
    </location>
    <ligand>
        <name>Mn(2+)</name>
        <dbReference type="ChEBI" id="CHEBI:29035"/>
        <label>2</label>
    </ligand>
</feature>
<feature type="binding site" evidence="1">
    <location>
        <position position="122"/>
    </location>
    <ligand>
        <name>substrate</name>
    </ligand>
</feature>
<feature type="binding site" evidence="1">
    <location>
        <position position="160"/>
    </location>
    <ligand>
        <name>substrate</name>
    </ligand>
</feature>
<feature type="binding site" evidence="1">
    <location>
        <position position="164"/>
    </location>
    <ligand>
        <name>substrate</name>
    </ligand>
</feature>
<feature type="binding site" evidence="1">
    <location>
        <position position="167"/>
    </location>
    <ligand>
        <name>substrate</name>
    </ligand>
</feature>
<feature type="binding site" evidence="1">
    <location>
        <position position="195"/>
    </location>
    <ligand>
        <name>Mn(2+)</name>
        <dbReference type="ChEBI" id="CHEBI:29035"/>
        <label>2</label>
    </ligand>
</feature>
<feature type="binding site" evidence="1">
    <location>
        <position position="195"/>
    </location>
    <ligand>
        <name>substrate</name>
    </ligand>
</feature>
<feature type="binding site" evidence="1">
    <location>
        <position position="197"/>
    </location>
    <ligand>
        <name>Mn(2+)</name>
        <dbReference type="ChEBI" id="CHEBI:29035"/>
        <label>1</label>
    </ligand>
</feature>
<gene>
    <name evidence="1" type="primary">lpxH</name>
    <name type="ordered locus">EC55989_0538</name>
</gene>
<dbReference type="EC" id="3.6.1.54" evidence="1"/>
<dbReference type="EMBL" id="CU928145">
    <property type="protein sequence ID" value="CAU96411.1"/>
    <property type="molecule type" value="Genomic_DNA"/>
</dbReference>
<dbReference type="RefSeq" id="WP_000212252.1">
    <property type="nucleotide sequence ID" value="NC_011748.1"/>
</dbReference>
<dbReference type="SMR" id="B7L7F1"/>
<dbReference type="GeneID" id="75204390"/>
<dbReference type="KEGG" id="eck:EC55989_0538"/>
<dbReference type="HOGENOM" id="CLU_074586_0_0_6"/>
<dbReference type="UniPathway" id="UPA00359">
    <property type="reaction ID" value="UER00480"/>
</dbReference>
<dbReference type="Proteomes" id="UP000000746">
    <property type="component" value="Chromosome"/>
</dbReference>
<dbReference type="GO" id="GO:0005737">
    <property type="term" value="C:cytoplasm"/>
    <property type="evidence" value="ECO:0007669"/>
    <property type="project" value="InterPro"/>
</dbReference>
<dbReference type="GO" id="GO:0019897">
    <property type="term" value="C:extrinsic component of plasma membrane"/>
    <property type="evidence" value="ECO:0007669"/>
    <property type="project" value="UniProtKB-UniRule"/>
</dbReference>
<dbReference type="GO" id="GO:0030145">
    <property type="term" value="F:manganese ion binding"/>
    <property type="evidence" value="ECO:0007669"/>
    <property type="project" value="UniProtKB-UniRule"/>
</dbReference>
<dbReference type="GO" id="GO:0008758">
    <property type="term" value="F:UDP-2,3-diacylglucosamine hydrolase activity"/>
    <property type="evidence" value="ECO:0007669"/>
    <property type="project" value="UniProtKB-UniRule"/>
</dbReference>
<dbReference type="GO" id="GO:0009245">
    <property type="term" value="P:lipid A biosynthetic process"/>
    <property type="evidence" value="ECO:0007669"/>
    <property type="project" value="UniProtKB-UniRule"/>
</dbReference>
<dbReference type="CDD" id="cd07398">
    <property type="entry name" value="MPP_YbbF-LpxH"/>
    <property type="match status" value="1"/>
</dbReference>
<dbReference type="FunFam" id="3.60.21.10:FF:000012">
    <property type="entry name" value="UDP-2,3-diacylglucosamine hydrolase"/>
    <property type="match status" value="1"/>
</dbReference>
<dbReference type="Gene3D" id="3.60.21.10">
    <property type="match status" value="1"/>
</dbReference>
<dbReference type="HAMAP" id="MF_00575">
    <property type="entry name" value="LpxH"/>
    <property type="match status" value="1"/>
</dbReference>
<dbReference type="InterPro" id="IPR004843">
    <property type="entry name" value="Calcineurin-like_PHP_ApaH"/>
</dbReference>
<dbReference type="InterPro" id="IPR043461">
    <property type="entry name" value="LpxH-like"/>
</dbReference>
<dbReference type="InterPro" id="IPR029052">
    <property type="entry name" value="Metallo-depent_PP-like"/>
</dbReference>
<dbReference type="InterPro" id="IPR010138">
    <property type="entry name" value="UDP-diacylglucosamine_Hdrlase"/>
</dbReference>
<dbReference type="NCBIfam" id="TIGR01854">
    <property type="entry name" value="lipid_A_lpxH"/>
    <property type="match status" value="1"/>
</dbReference>
<dbReference type="NCBIfam" id="NF003743">
    <property type="entry name" value="PRK05340.1"/>
    <property type="match status" value="1"/>
</dbReference>
<dbReference type="PANTHER" id="PTHR34990:SF1">
    <property type="entry name" value="UDP-2,3-DIACYLGLUCOSAMINE HYDROLASE"/>
    <property type="match status" value="1"/>
</dbReference>
<dbReference type="PANTHER" id="PTHR34990">
    <property type="entry name" value="UDP-2,3-DIACYLGLUCOSAMINE HYDROLASE-RELATED"/>
    <property type="match status" value="1"/>
</dbReference>
<dbReference type="Pfam" id="PF00149">
    <property type="entry name" value="Metallophos"/>
    <property type="match status" value="1"/>
</dbReference>
<dbReference type="SUPFAM" id="SSF56300">
    <property type="entry name" value="Metallo-dependent phosphatases"/>
    <property type="match status" value="1"/>
</dbReference>
<evidence type="ECO:0000255" key="1">
    <source>
        <dbReference type="HAMAP-Rule" id="MF_00575"/>
    </source>
</evidence>
<name>LPXH_ECO55</name>
<comment type="function">
    <text evidence="1">Hydrolyzes the pyrophosphate bond of UDP-2,3-diacylglucosamine to yield 2,3-diacylglucosamine 1-phosphate (lipid X) and UMP by catalyzing the attack of water at the alpha-P atom. Involved in the biosynthesis of lipid A, a phosphorylated glycolipid that anchors the lipopolysaccharide to the outer membrane of the cell.</text>
</comment>
<comment type="catalytic activity">
    <reaction evidence="1">
        <text>UDP-2-N,3-O-bis[(3R)-3-hydroxytetradecanoyl]-alpha-D-glucosamine + H2O = 2-N,3-O-bis[(3R)-3-hydroxytetradecanoyl]-alpha-D-glucosaminyl 1-phosphate + UMP + 2 H(+)</text>
        <dbReference type="Rhea" id="RHEA:25213"/>
        <dbReference type="ChEBI" id="CHEBI:15377"/>
        <dbReference type="ChEBI" id="CHEBI:15378"/>
        <dbReference type="ChEBI" id="CHEBI:57865"/>
        <dbReference type="ChEBI" id="CHEBI:57957"/>
        <dbReference type="ChEBI" id="CHEBI:78847"/>
        <dbReference type="EC" id="3.6.1.54"/>
    </reaction>
</comment>
<comment type="cofactor">
    <cofactor evidence="1">
        <name>Mn(2+)</name>
        <dbReference type="ChEBI" id="CHEBI:29035"/>
    </cofactor>
    <text evidence="1">Binds 2 Mn(2+) ions per subunit in a binuclear metal center.</text>
</comment>
<comment type="pathway">
    <text evidence="1">Glycolipid biosynthesis; lipid IV(A) biosynthesis; lipid IV(A) from (3R)-3-hydroxytetradecanoyl-[acyl-carrier-protein] and UDP-N-acetyl-alpha-D-glucosamine: step 4/6.</text>
</comment>
<comment type="subcellular location">
    <subcellularLocation>
        <location evidence="1">Cell inner membrane</location>
        <topology evidence="1">Peripheral membrane protein</topology>
        <orientation evidence="1">Cytoplasmic side</orientation>
    </subcellularLocation>
</comment>
<comment type="similarity">
    <text evidence="1">Belongs to the LpxH family.</text>
</comment>
<accession>B7L7F1</accession>
<reference key="1">
    <citation type="journal article" date="2009" name="PLoS Genet.">
        <title>Organised genome dynamics in the Escherichia coli species results in highly diverse adaptive paths.</title>
        <authorList>
            <person name="Touchon M."/>
            <person name="Hoede C."/>
            <person name="Tenaillon O."/>
            <person name="Barbe V."/>
            <person name="Baeriswyl S."/>
            <person name="Bidet P."/>
            <person name="Bingen E."/>
            <person name="Bonacorsi S."/>
            <person name="Bouchier C."/>
            <person name="Bouvet O."/>
            <person name="Calteau A."/>
            <person name="Chiapello H."/>
            <person name="Clermont O."/>
            <person name="Cruveiller S."/>
            <person name="Danchin A."/>
            <person name="Diard M."/>
            <person name="Dossat C."/>
            <person name="Karoui M.E."/>
            <person name="Frapy E."/>
            <person name="Garry L."/>
            <person name="Ghigo J.M."/>
            <person name="Gilles A.M."/>
            <person name="Johnson J."/>
            <person name="Le Bouguenec C."/>
            <person name="Lescat M."/>
            <person name="Mangenot S."/>
            <person name="Martinez-Jehanne V."/>
            <person name="Matic I."/>
            <person name="Nassif X."/>
            <person name="Oztas S."/>
            <person name="Petit M.A."/>
            <person name="Pichon C."/>
            <person name="Rouy Z."/>
            <person name="Ruf C.S."/>
            <person name="Schneider D."/>
            <person name="Tourret J."/>
            <person name="Vacherie B."/>
            <person name="Vallenet D."/>
            <person name="Medigue C."/>
            <person name="Rocha E.P.C."/>
            <person name="Denamur E."/>
        </authorList>
    </citation>
    <scope>NUCLEOTIDE SEQUENCE [LARGE SCALE GENOMIC DNA]</scope>
    <source>
        <strain>55989 / EAEC</strain>
    </source>
</reference>
<protein>
    <recommendedName>
        <fullName evidence="1">UDP-2,3-diacylglucosamine hydrolase</fullName>
        <ecNumber evidence="1">3.6.1.54</ecNumber>
    </recommendedName>
    <alternativeName>
        <fullName evidence="1">UDP-2,3-diacylglucosamine diphosphatase</fullName>
    </alternativeName>
</protein>
<organism>
    <name type="scientific">Escherichia coli (strain 55989 / EAEC)</name>
    <dbReference type="NCBI Taxonomy" id="585055"/>
    <lineage>
        <taxon>Bacteria</taxon>
        <taxon>Pseudomonadati</taxon>
        <taxon>Pseudomonadota</taxon>
        <taxon>Gammaproteobacteria</taxon>
        <taxon>Enterobacterales</taxon>
        <taxon>Enterobacteriaceae</taxon>
        <taxon>Escherichia</taxon>
    </lineage>
</organism>
<keyword id="KW-0997">Cell inner membrane</keyword>
<keyword id="KW-1003">Cell membrane</keyword>
<keyword id="KW-0378">Hydrolase</keyword>
<keyword id="KW-0441">Lipid A biosynthesis</keyword>
<keyword id="KW-0444">Lipid biosynthesis</keyword>
<keyword id="KW-0443">Lipid metabolism</keyword>
<keyword id="KW-0464">Manganese</keyword>
<keyword id="KW-0472">Membrane</keyword>
<keyword id="KW-0479">Metal-binding</keyword>
<keyword id="KW-1185">Reference proteome</keyword>
<sequence>MATLFIADLHLCVEEPAITAGFLRFLAGEARKADALYILGDLFEAWIGDDDPNPLHRQMAAAIKAVSDSGVPCYFIHGNRDFLLGKRFARESGMTLLPEEKVLELYGRRVLIMHGDTLCTDDAGYQAFRAKVHKPWLQMLFLALPLFVRKRIAARMRANSKEANSSKSLAIMDVNQNAVVSAMEKHQVQWLIHGHTHRPAVHELIANQQPAFRVVLGAWHTEGSMVKVTADDVELIHFPF</sequence>
<proteinExistence type="inferred from homology"/>